<sequence>MYEGKKTKNMFLTRALEKILADKEVKKAHHSQLRKACEVALEEIKVETEKQSPPHGEAKAGSGTLPPVKSKTNFIEADKYFLPFELACQSKCPRIVSTSLDCLQKLIAYGHLTGSAPDSTTPGKKLIDRIIETICGCFQGPQTDEGVQLQIIKALLTAVTSQHIEIHEGTVLQAVRTCYNIYLASKNLINQTTAKATLTQMLNVIFARMENQALQEAKQMERERHRQQHHLLQSPVSHHEPESPHLRYLPPQTVDHIAQEQEGDLDPQTHDVDKSLQDDIEPENGSDISSAENEQTEADQATAAETLSKDDVLCDGECEEKPQDIVQSIVEEMVDIIVGDMGEGTAVSASADGNAGAVEDGSDSENVQANGIPGTPISAAYTPSLPDDRLSVSSNDTQESGNSSGPSPGAKFSHILQKDAFLVFRSLCKLSMKPLSDGPPDPKSHELRSKILSLQLLLSILQNAGPVFRTNEMFINAIKQYLCVALSKNGVSSVPEVFELSLSIFLTLLSNFKTHLKMQIEVFFKEIFLYILETSTSSFDHKWMVIQTLTRICADAQSVVDIYVNYDCDLNAANIFERLVNDLSKIAQGRGSQELGMSNVQELSLRKKGLECLVSILKCMVEWSKDQYVNPNSQTTLGQEKPSEQEISEIKHPETINRYGSLNSLESTSSSGIGSYSTQMSGTDNPEQFEVLKQQKEIIEQGIDLFNKKPKRGIQYLQEQGMLGTTPEDIAQFLHQEERLDSTQAGEFLGDNDKFNKEVMYAYVDQHDFSGKDFVSALRLFLEGFRLPGEAQKIDRLMEKFAARYLECNQGQTLFASADTAYVLAYSIIMLTTDLHSPQVKNKMTKEQYIKMNRGINDSKDLPEEYLSAIYNEIAGKKISMKETKELTIPTKSTKQNVASEKQRRLLYNLEMEQMAKTAKALMEAVSHVQAPFTSATHLEHVRPMFKLAWTPFLAAFSVGLQDCDDTDVASLCLEGIRCAIRIACIFSIQLERDAYVQALARFTLLTVSSGITEMKQKNIDTIKTLITVAHTDGNYLGNSWHEILKCISQLELAQLIGTGVKPRYISGTVRGREGSLTGTKDQAPDEFVGLGLVGGNVDWKQIASIQESIGETSSQSVVVAVDRIFTGSTRLDGNAIVDFVRWLCAVSMDELLSTTHPRMFSLQKIVEISYYNMGRIRLQWSRIWEVIGDHFNKVGCNPNEDVAIFAVDSLRQLSMKFLEKGELANFRFQKDFLRPFEHIMKRNRSPTIRDMVVRCIAQMVNSQAANIRSGWKNIFSVFHLAASDQDESIVELAFQTSGHIVTLVFEKHFPATIDSFQDAVKCLSEFACNAAFPDTSMEAIRLIRHCAKYVSDRPQAFKEYTSDDMNVAPEDRVWVRGWFPILFELSCVINRCKLDVRTRGLTVMFEIMKTYGHTYEKHWWQDLFRIVFRIFDNMKLPEQQTEKAEWMTTTCNHALYAICDVFTQYLEVLSDVLLDDIFAQLYWCVQQDNEQLARSGTNCLENVVILNGEKFTLEIWDKTCNCTLDIFKTTIPHALLTWRPTSGEAAPPSPSAMSEKQLDAISQKSVDIHDSAQPRSSDNRQQAPLVSVSPASEEVSKGRPTAKFPEQKLFAALLIKCVVQLELIQTIDNIVFFPATSKKEDAENLAAAQRDAVDFDVRVDTQDQGMYRFLTSQQLFKLLDCLLESHRFAKAFNSNNEQRTALWKAGFKGKSKPNLLKQETSSLACGLRILFRMYTDESRVSAWEEVQQRLLNVCSEALSYFLTLTSESHREAWTNLLLLFLTKVLKISDNRFKAHASFYYPLLCEIMQFDLIPELRAVLRRFFLRIGIVFQISQPPEQELGINKQ</sequence>
<organism>
    <name type="scientific">Rattus norvegicus</name>
    <name type="common">Rat</name>
    <dbReference type="NCBI Taxonomy" id="10116"/>
    <lineage>
        <taxon>Eukaryota</taxon>
        <taxon>Metazoa</taxon>
        <taxon>Chordata</taxon>
        <taxon>Craniata</taxon>
        <taxon>Vertebrata</taxon>
        <taxon>Euteleostomi</taxon>
        <taxon>Mammalia</taxon>
        <taxon>Eutheria</taxon>
        <taxon>Euarchontoglires</taxon>
        <taxon>Glires</taxon>
        <taxon>Rodentia</taxon>
        <taxon>Myomorpha</taxon>
        <taxon>Muroidea</taxon>
        <taxon>Muridae</taxon>
        <taxon>Murinae</taxon>
        <taxon>Rattus</taxon>
    </lineage>
</organism>
<evidence type="ECO:0000250" key="1"/>
<evidence type="ECO:0000250" key="2">
    <source>
        <dbReference type="UniProtKB" id="Q9Y6D6"/>
    </source>
</evidence>
<evidence type="ECO:0000255" key="3">
    <source>
        <dbReference type="PROSITE-ProRule" id="PRU00189"/>
    </source>
</evidence>
<evidence type="ECO:0000256" key="4">
    <source>
        <dbReference type="SAM" id="MobiDB-lite"/>
    </source>
</evidence>
<evidence type="ECO:0000269" key="5">
    <source>
    </source>
</evidence>
<evidence type="ECO:0007744" key="6">
    <source>
    </source>
</evidence>
<reference key="1">
    <citation type="journal article" date="2004" name="Nature">
        <title>Genome sequence of the Brown Norway rat yields insights into mammalian evolution.</title>
        <authorList>
            <person name="Gibbs R.A."/>
            <person name="Weinstock G.M."/>
            <person name="Metzker M.L."/>
            <person name="Muzny D.M."/>
            <person name="Sodergren E.J."/>
            <person name="Scherer S."/>
            <person name="Scott G."/>
            <person name="Steffen D."/>
            <person name="Worley K.C."/>
            <person name="Burch P.E."/>
            <person name="Okwuonu G."/>
            <person name="Hines S."/>
            <person name="Lewis L."/>
            <person name="Deramo C."/>
            <person name="Delgado O."/>
            <person name="Dugan-Rocha S."/>
            <person name="Miner G."/>
            <person name="Morgan M."/>
            <person name="Hawes A."/>
            <person name="Gill R."/>
            <person name="Holt R.A."/>
            <person name="Adams M.D."/>
            <person name="Amanatides P.G."/>
            <person name="Baden-Tillson H."/>
            <person name="Barnstead M."/>
            <person name="Chin S."/>
            <person name="Evans C.A."/>
            <person name="Ferriera S."/>
            <person name="Fosler C."/>
            <person name="Glodek A."/>
            <person name="Gu Z."/>
            <person name="Jennings D."/>
            <person name="Kraft C.L."/>
            <person name="Nguyen T."/>
            <person name="Pfannkoch C.M."/>
            <person name="Sitter C."/>
            <person name="Sutton G.G."/>
            <person name="Venter J.C."/>
            <person name="Woodage T."/>
            <person name="Smith D."/>
            <person name="Lee H.-M."/>
            <person name="Gustafson E."/>
            <person name="Cahill P."/>
            <person name="Kana A."/>
            <person name="Doucette-Stamm L."/>
            <person name="Weinstock K."/>
            <person name="Fechtel K."/>
            <person name="Weiss R.B."/>
            <person name="Dunn D.M."/>
            <person name="Green E.D."/>
            <person name="Blakesley R.W."/>
            <person name="Bouffard G.G."/>
            <person name="De Jong P.J."/>
            <person name="Osoegawa K."/>
            <person name="Zhu B."/>
            <person name="Marra M."/>
            <person name="Schein J."/>
            <person name="Bosdet I."/>
            <person name="Fjell C."/>
            <person name="Jones S."/>
            <person name="Krzywinski M."/>
            <person name="Mathewson C."/>
            <person name="Siddiqui A."/>
            <person name="Wye N."/>
            <person name="McPherson J."/>
            <person name="Zhao S."/>
            <person name="Fraser C.M."/>
            <person name="Shetty J."/>
            <person name="Shatsman S."/>
            <person name="Geer K."/>
            <person name="Chen Y."/>
            <person name="Abramzon S."/>
            <person name="Nierman W.C."/>
            <person name="Havlak P.H."/>
            <person name="Chen R."/>
            <person name="Durbin K.J."/>
            <person name="Egan A."/>
            <person name="Ren Y."/>
            <person name="Song X.-Z."/>
            <person name="Li B."/>
            <person name="Liu Y."/>
            <person name="Qin X."/>
            <person name="Cawley S."/>
            <person name="Cooney A.J."/>
            <person name="D'Souza L.M."/>
            <person name="Martin K."/>
            <person name="Wu J.Q."/>
            <person name="Gonzalez-Garay M.L."/>
            <person name="Jackson A.R."/>
            <person name="Kalafus K.J."/>
            <person name="McLeod M.P."/>
            <person name="Milosavljevic A."/>
            <person name="Virk D."/>
            <person name="Volkov A."/>
            <person name="Wheeler D.A."/>
            <person name="Zhang Z."/>
            <person name="Bailey J.A."/>
            <person name="Eichler E.E."/>
            <person name="Tuzun E."/>
            <person name="Birney E."/>
            <person name="Mongin E."/>
            <person name="Ureta-Vidal A."/>
            <person name="Woodwark C."/>
            <person name="Zdobnov E."/>
            <person name="Bork P."/>
            <person name="Suyama M."/>
            <person name="Torrents D."/>
            <person name="Alexandersson M."/>
            <person name="Trask B.J."/>
            <person name="Young J.M."/>
            <person name="Huang H."/>
            <person name="Wang H."/>
            <person name="Xing H."/>
            <person name="Daniels S."/>
            <person name="Gietzen D."/>
            <person name="Schmidt J."/>
            <person name="Stevens K."/>
            <person name="Vitt U."/>
            <person name="Wingrove J."/>
            <person name="Camara F."/>
            <person name="Mar Alba M."/>
            <person name="Abril J.F."/>
            <person name="Guigo R."/>
            <person name="Smit A."/>
            <person name="Dubchak I."/>
            <person name="Rubin E.M."/>
            <person name="Couronne O."/>
            <person name="Poliakov A."/>
            <person name="Huebner N."/>
            <person name="Ganten D."/>
            <person name="Goesele C."/>
            <person name="Hummel O."/>
            <person name="Kreitler T."/>
            <person name="Lee Y.-A."/>
            <person name="Monti J."/>
            <person name="Schulz H."/>
            <person name="Zimdahl H."/>
            <person name="Himmelbauer H."/>
            <person name="Lehrach H."/>
            <person name="Jacob H.J."/>
            <person name="Bromberg S."/>
            <person name="Gullings-Handley J."/>
            <person name="Jensen-Seaman M.I."/>
            <person name="Kwitek A.E."/>
            <person name="Lazar J."/>
            <person name="Pasko D."/>
            <person name="Tonellato P.J."/>
            <person name="Twigger S."/>
            <person name="Ponting C.P."/>
            <person name="Duarte J.M."/>
            <person name="Rice S."/>
            <person name="Goodstadt L."/>
            <person name="Beatson S.A."/>
            <person name="Emes R.D."/>
            <person name="Winter E.E."/>
            <person name="Webber C."/>
            <person name="Brandt P."/>
            <person name="Nyakatura G."/>
            <person name="Adetobi M."/>
            <person name="Chiaromonte F."/>
            <person name="Elnitski L."/>
            <person name="Eswara P."/>
            <person name="Hardison R.C."/>
            <person name="Hou M."/>
            <person name="Kolbe D."/>
            <person name="Makova K."/>
            <person name="Miller W."/>
            <person name="Nekrutenko A."/>
            <person name="Riemer C."/>
            <person name="Schwartz S."/>
            <person name="Taylor J."/>
            <person name="Yang S."/>
            <person name="Zhang Y."/>
            <person name="Lindpaintner K."/>
            <person name="Andrews T.D."/>
            <person name="Caccamo M."/>
            <person name="Clamp M."/>
            <person name="Clarke L."/>
            <person name="Curwen V."/>
            <person name="Durbin R.M."/>
            <person name="Eyras E."/>
            <person name="Searle S.M."/>
            <person name="Cooper G.M."/>
            <person name="Batzoglou S."/>
            <person name="Brudno M."/>
            <person name="Sidow A."/>
            <person name="Stone E.A."/>
            <person name="Payseur B.A."/>
            <person name="Bourque G."/>
            <person name="Lopez-Otin C."/>
            <person name="Puente X.S."/>
            <person name="Chakrabarti K."/>
            <person name="Chatterji S."/>
            <person name="Dewey C."/>
            <person name="Pachter L."/>
            <person name="Bray N."/>
            <person name="Yap V.B."/>
            <person name="Caspi A."/>
            <person name="Tesler G."/>
            <person name="Pevzner P.A."/>
            <person name="Haussler D."/>
            <person name="Roskin K.M."/>
            <person name="Baertsch R."/>
            <person name="Clawson H."/>
            <person name="Furey T.S."/>
            <person name="Hinrichs A.S."/>
            <person name="Karolchik D."/>
            <person name="Kent W.J."/>
            <person name="Rosenbloom K.R."/>
            <person name="Trumbower H."/>
            <person name="Weirauch M."/>
            <person name="Cooper D.N."/>
            <person name="Stenson P.D."/>
            <person name="Ma B."/>
            <person name="Brent M."/>
            <person name="Arumugam M."/>
            <person name="Shteynberg D."/>
            <person name="Copley R.R."/>
            <person name="Taylor M.S."/>
            <person name="Riethman H."/>
            <person name="Mudunuri U."/>
            <person name="Peterson J."/>
            <person name="Guyer M."/>
            <person name="Felsenfeld A."/>
            <person name="Old S."/>
            <person name="Mockrin S."/>
            <person name="Collins F.S."/>
        </authorList>
    </citation>
    <scope>NUCLEOTIDE SEQUENCE [LARGE SCALE GENOMIC DNA]</scope>
    <source>
        <strain>Brown Norway</strain>
    </source>
</reference>
<reference key="2">
    <citation type="journal article" date="2002" name="Mol. Biol. Cell">
        <title>Localization of large ADP-ribosylation factor-guanine nucleotide exchange factors to different Golgi compartments: evidence for distinct functions in protein traffic.</title>
        <authorList>
            <person name="Zhao X."/>
            <person name="Lasell T.K."/>
            <person name="Melancon P."/>
        </authorList>
    </citation>
    <scope>SUBCELLULAR LOCATION</scope>
</reference>
<reference key="3">
    <citation type="journal article" date="2012" name="Nat. Commun.">
        <title>Quantitative maps of protein phosphorylation sites across 14 different rat organs and tissues.</title>
        <authorList>
            <person name="Lundby A."/>
            <person name="Secher A."/>
            <person name="Lage K."/>
            <person name="Nordsborg N.B."/>
            <person name="Dmytriyev A."/>
            <person name="Lundby C."/>
            <person name="Olsen J.V."/>
        </authorList>
    </citation>
    <scope>PHOSPHORYLATION [LARGE SCALE ANALYSIS] AT SER-286; SER-289; SER-290; SER-1563 AND SER-1566</scope>
    <scope>IDENTIFICATION BY MASS SPECTROMETRY [LARGE SCALE ANALYSIS]</scope>
</reference>
<keyword id="KW-0963">Cytoplasm</keyword>
<keyword id="KW-0333">Golgi apparatus</keyword>
<keyword id="KW-0344">Guanine-nucleotide releasing factor</keyword>
<keyword id="KW-0472">Membrane</keyword>
<keyword id="KW-0539">Nucleus</keyword>
<keyword id="KW-0597">Phosphoprotein</keyword>
<keyword id="KW-0653">Protein transport</keyword>
<keyword id="KW-1185">Reference proteome</keyword>
<keyword id="KW-0813">Transport</keyword>
<proteinExistence type="evidence at protein level"/>
<protein>
    <recommendedName>
        <fullName>Brefeldin A-inhibited guanine nucleotide-exchange protein 1</fullName>
        <shortName>BIG1</shortName>
        <shortName>Brefeldin A-inhibited GEP 1</shortName>
    </recommendedName>
    <alternativeName>
        <fullName>ADP-ribosylation factor guanine nucleotide-exchange factor 1</fullName>
    </alternativeName>
</protein>
<gene>
    <name type="primary">Arfgef1</name>
</gene>
<accession>D4A631</accession>
<comment type="function">
    <text evidence="2">Promotes guanine-nucleotide exchange on ARF1 and ARF3. Promotes the activation of ARF1/ARF3 through replacement of GDP with GTP. Involved in vesicular trafficking. Required for the maintenance of Golgi structure; the function may be independent of its GEF activity. Required for the maturation of integrin beta-1 in the Golgi. Involved in the establishment and persistence of cell polarity during directed cell movement in wound healing. Proposed to act as A kinase-anchoring protein (AKAP) and may mediate crosstalk between Arf and PKA pathways. Inhibits GAP activity of MYO9B probably through competitive RhoA binding. The function in the nucleus remains to be determined (By similarity).</text>
</comment>
<comment type="activity regulation">
    <text evidence="1">Inhibited by brefeldin A.</text>
</comment>
<comment type="subunit">
    <text evidence="2">Homodimer. Interacts with ARFGEF2/BIG2; both proteins are probably part of the same or very similar macromolecular complexes. Interacts with FKBP2. Interacts with MYO9B. Interacts with PRKAR1A and PRKAR2A. Interacts with PPP1CC. Interacts with NCL, FBL, NUP62 and U3 small nucleolar RNA. Interacts with DPY30. Interacts with PDE3A. Interacts with KANK1. Interacts with TBC1D22A and TBC1D22B.</text>
</comment>
<comment type="interaction">
    <interactant intactId="EBI-6251168">
        <id>D4A631</id>
    </interactant>
    <interactant intactId="EBI-6251137">
        <id>Q63358</id>
        <label>Myo9b</label>
    </interactant>
    <organismsDiffer>false</organismsDiffer>
    <experiments>4</experiments>
</comment>
<comment type="subcellular location">
    <subcellularLocation>
        <location evidence="1">Cytoplasm</location>
    </subcellularLocation>
    <subcellularLocation>
        <location evidence="1">Cytoplasm</location>
        <location evidence="1">Perinuclear region</location>
    </subcellularLocation>
    <subcellularLocation>
        <location evidence="5">Golgi apparatus</location>
    </subcellularLocation>
    <subcellularLocation>
        <location evidence="5">Golgi apparatus</location>
        <location evidence="5">trans-Golgi network</location>
    </subcellularLocation>
    <subcellularLocation>
        <location evidence="1">Nucleus</location>
    </subcellularLocation>
    <subcellularLocation>
        <location evidence="1">Nucleus</location>
        <location evidence="1">Nucleolus</location>
    </subcellularLocation>
    <subcellularLocation>
        <location evidence="1">Nucleus matrix</location>
    </subcellularLocation>
    <subcellularLocation>
        <location evidence="1">Membrane</location>
    </subcellularLocation>
    <text evidence="1">Translocates from cytoplasm to membranes and nucleus upon cAMP treatment (By similarity). PRKAR1B.</text>
</comment>
<comment type="PTM">
    <text evidence="1">Phosphorylated. In vitro phosphorylated by PKA reducing its GEF activity and dephosphorylated by phosphatase PP1 (By similarity).</text>
</comment>
<name>BIG1_RAT</name>
<feature type="chain" id="PRO_0000419331" description="Brefeldin A-inhibited guanine nucleotide-exchange protein 1">
    <location>
        <begin position="1"/>
        <end position="1846"/>
    </location>
</feature>
<feature type="domain" description="SEC7" evidence="3">
    <location>
        <begin position="688"/>
        <end position="877"/>
    </location>
</feature>
<feature type="region of interest" description="DCB; DCB:DCB domain and DCB:HUS domain interaction" evidence="1">
    <location>
        <begin position="2"/>
        <end position="224"/>
    </location>
</feature>
<feature type="region of interest" description="Disordered" evidence="4">
    <location>
        <begin position="217"/>
        <end position="248"/>
    </location>
</feature>
<feature type="region of interest" description="Disordered" evidence="4">
    <location>
        <begin position="264"/>
        <end position="302"/>
    </location>
</feature>
<feature type="region of interest" description="Disordered" evidence="4">
    <location>
        <begin position="347"/>
        <end position="410"/>
    </location>
</feature>
<feature type="region of interest" description="HUS; DCB:HUS domain interaction" evidence="1">
    <location>
        <begin position="554"/>
        <end position="574"/>
    </location>
</feature>
<feature type="region of interest" description="Disordered" evidence="4">
    <location>
        <begin position="631"/>
        <end position="684"/>
    </location>
</feature>
<feature type="region of interest" description="Disordered" evidence="4">
    <location>
        <begin position="1571"/>
        <end position="1600"/>
    </location>
</feature>
<feature type="short sequence motif" description="Nuclear localization signal (NLS)" evidence="1">
    <location>
        <begin position="708"/>
        <end position="712"/>
    </location>
</feature>
<feature type="compositionally biased region" description="Basic and acidic residues" evidence="4">
    <location>
        <begin position="267"/>
        <end position="277"/>
    </location>
</feature>
<feature type="compositionally biased region" description="Polar residues" evidence="4">
    <location>
        <begin position="391"/>
        <end position="406"/>
    </location>
</feature>
<feature type="compositionally biased region" description="Basic and acidic residues" evidence="4">
    <location>
        <begin position="641"/>
        <end position="655"/>
    </location>
</feature>
<feature type="compositionally biased region" description="Low complexity" evidence="4">
    <location>
        <begin position="661"/>
        <end position="681"/>
    </location>
</feature>
<feature type="compositionally biased region" description="Polar residues" evidence="4">
    <location>
        <begin position="1574"/>
        <end position="1585"/>
    </location>
</feature>
<feature type="modified residue" description="Phosphoserine" evidence="2">
    <location>
        <position position="52"/>
    </location>
</feature>
<feature type="modified residue" description="Phosphoserine" evidence="6">
    <location>
        <position position="286"/>
    </location>
</feature>
<feature type="modified residue" description="Phosphoserine" evidence="6">
    <location>
        <position position="289"/>
    </location>
</feature>
<feature type="modified residue" description="Phosphoserine" evidence="6">
    <location>
        <position position="290"/>
    </location>
</feature>
<feature type="modified residue" description="Phosphoserine" evidence="2">
    <location>
        <position position="394"/>
    </location>
</feature>
<feature type="modified residue" description="Phosphoserine" evidence="2">
    <location>
        <position position="407"/>
    </location>
</feature>
<feature type="modified residue" description="Phosphoserine" evidence="2">
    <location>
        <position position="1076"/>
    </location>
</feature>
<feature type="modified residue" description="Phosphoserine" evidence="6">
    <location>
        <position position="1563"/>
    </location>
</feature>
<feature type="modified residue" description="Phosphoserine" evidence="6">
    <location>
        <position position="1566"/>
    </location>
</feature>
<dbReference type="EMBL" id="CH473984">
    <property type="protein sequence ID" value="EDM11544.1"/>
    <property type="molecule type" value="Genomic_DNA"/>
</dbReference>
<dbReference type="RefSeq" id="NP_001263985.1">
    <property type="nucleotide sequence ID" value="NM_001277056.1"/>
</dbReference>
<dbReference type="SMR" id="D4A631"/>
<dbReference type="BioGRID" id="260275">
    <property type="interactions" value="1"/>
</dbReference>
<dbReference type="FunCoup" id="D4A631">
    <property type="interactions" value="3958"/>
</dbReference>
<dbReference type="IntAct" id="D4A631">
    <property type="interactions" value="4"/>
</dbReference>
<dbReference type="STRING" id="10116.ENSRNOP00000007766"/>
<dbReference type="GlyGen" id="D4A631">
    <property type="glycosylation" value="1 site"/>
</dbReference>
<dbReference type="iPTMnet" id="D4A631"/>
<dbReference type="PhosphoSitePlus" id="D4A631"/>
<dbReference type="jPOST" id="D4A631"/>
<dbReference type="PaxDb" id="10116-ENSRNOP00000007766"/>
<dbReference type="PeptideAtlas" id="D4A631"/>
<dbReference type="GeneID" id="312915"/>
<dbReference type="KEGG" id="rno:312915"/>
<dbReference type="UCSC" id="RGD:1560793">
    <property type="organism name" value="rat"/>
</dbReference>
<dbReference type="AGR" id="RGD:1560793"/>
<dbReference type="CTD" id="10565"/>
<dbReference type="RGD" id="1560793">
    <property type="gene designation" value="Arfgef1"/>
</dbReference>
<dbReference type="VEuPathDB" id="HostDB:ENSRNOG00000005703"/>
<dbReference type="eggNOG" id="KOG0929">
    <property type="taxonomic scope" value="Eukaryota"/>
</dbReference>
<dbReference type="HOGENOM" id="CLU_000691_1_0_1"/>
<dbReference type="InParanoid" id="D4A631"/>
<dbReference type="OrthoDB" id="18431at2759"/>
<dbReference type="PhylomeDB" id="D4A631"/>
<dbReference type="TreeFam" id="TF300714"/>
<dbReference type="PRO" id="PR:D4A631"/>
<dbReference type="Proteomes" id="UP000002494">
    <property type="component" value="Chromosome 5"/>
</dbReference>
<dbReference type="Proteomes" id="UP000234681">
    <property type="component" value="Chromosome 5"/>
</dbReference>
<dbReference type="Bgee" id="ENSRNOG00000005703">
    <property type="expression patterns" value="Expressed in jejunum and 20 other cell types or tissues"/>
</dbReference>
<dbReference type="GO" id="GO:0005829">
    <property type="term" value="C:cytosol"/>
    <property type="evidence" value="ECO:0000250"/>
    <property type="project" value="UniProtKB"/>
</dbReference>
<dbReference type="GO" id="GO:0000139">
    <property type="term" value="C:Golgi membrane"/>
    <property type="evidence" value="ECO:0000250"/>
    <property type="project" value="UniProtKB"/>
</dbReference>
<dbReference type="GO" id="GO:0016363">
    <property type="term" value="C:nuclear matrix"/>
    <property type="evidence" value="ECO:0007669"/>
    <property type="project" value="UniProtKB-SubCell"/>
</dbReference>
<dbReference type="GO" id="GO:0005730">
    <property type="term" value="C:nucleolus"/>
    <property type="evidence" value="ECO:0000250"/>
    <property type="project" value="UniProtKB"/>
</dbReference>
<dbReference type="GO" id="GO:0005654">
    <property type="term" value="C:nucleoplasm"/>
    <property type="evidence" value="ECO:0007669"/>
    <property type="project" value="Ensembl"/>
</dbReference>
<dbReference type="GO" id="GO:0048471">
    <property type="term" value="C:perinuclear region of cytoplasm"/>
    <property type="evidence" value="ECO:0000266"/>
    <property type="project" value="RGD"/>
</dbReference>
<dbReference type="GO" id="GO:0030532">
    <property type="term" value="C:small nuclear ribonucleoprotein complex"/>
    <property type="evidence" value="ECO:0000250"/>
    <property type="project" value="UniProtKB"/>
</dbReference>
<dbReference type="GO" id="GO:0005802">
    <property type="term" value="C:trans-Golgi network"/>
    <property type="evidence" value="ECO:0000314"/>
    <property type="project" value="UniProtKB"/>
</dbReference>
<dbReference type="GO" id="GO:0005085">
    <property type="term" value="F:guanyl-nucleotide exchange factor activity"/>
    <property type="evidence" value="ECO:0000266"/>
    <property type="project" value="RGD"/>
</dbReference>
<dbReference type="GO" id="GO:0017022">
    <property type="term" value="F:myosin binding"/>
    <property type="evidence" value="ECO:0000266"/>
    <property type="project" value="RGD"/>
</dbReference>
<dbReference type="GO" id="GO:0034237">
    <property type="term" value="F:protein kinase A regulatory subunit binding"/>
    <property type="evidence" value="ECO:0000250"/>
    <property type="project" value="UniProtKB"/>
</dbReference>
<dbReference type="GO" id="GO:0010256">
    <property type="term" value="P:endomembrane system organization"/>
    <property type="evidence" value="ECO:0000250"/>
    <property type="project" value="UniProtKB"/>
</dbReference>
<dbReference type="GO" id="GO:0007030">
    <property type="term" value="P:Golgi organization"/>
    <property type="evidence" value="ECO:0000250"/>
    <property type="project" value="UniProtKB"/>
</dbReference>
<dbReference type="GO" id="GO:0030837">
    <property type="term" value="P:negative regulation of actin filament polymerization"/>
    <property type="evidence" value="ECO:0000250"/>
    <property type="project" value="UniProtKB"/>
</dbReference>
<dbReference type="GO" id="GO:0034260">
    <property type="term" value="P:negative regulation of GTPase activity"/>
    <property type="evidence" value="ECO:0000250"/>
    <property type="project" value="UniProtKB"/>
</dbReference>
<dbReference type="GO" id="GO:0031175">
    <property type="term" value="P:neuron projection development"/>
    <property type="evidence" value="ECO:0000315"/>
    <property type="project" value="CACAO"/>
</dbReference>
<dbReference type="GO" id="GO:0051897">
    <property type="term" value="P:positive regulation of phosphatidylinositol 3-kinase/protein kinase B signal transduction"/>
    <property type="evidence" value="ECO:0000315"/>
    <property type="project" value="CACAO"/>
</dbReference>
<dbReference type="GO" id="GO:0090303">
    <property type="term" value="P:positive regulation of wound healing"/>
    <property type="evidence" value="ECO:0000250"/>
    <property type="project" value="UniProtKB"/>
</dbReference>
<dbReference type="GO" id="GO:0006486">
    <property type="term" value="P:protein glycosylation"/>
    <property type="evidence" value="ECO:0000250"/>
    <property type="project" value="UniProtKB"/>
</dbReference>
<dbReference type="GO" id="GO:0015031">
    <property type="term" value="P:protein transport"/>
    <property type="evidence" value="ECO:0007669"/>
    <property type="project" value="UniProtKB-KW"/>
</dbReference>
<dbReference type="GO" id="GO:0032012">
    <property type="term" value="P:regulation of ARF protein signal transduction"/>
    <property type="evidence" value="ECO:0007669"/>
    <property type="project" value="InterPro"/>
</dbReference>
<dbReference type="GO" id="GO:2000114">
    <property type="term" value="P:regulation of establishment of cell polarity"/>
    <property type="evidence" value="ECO:0000250"/>
    <property type="project" value="UniProtKB"/>
</dbReference>
<dbReference type="CDD" id="cd00171">
    <property type="entry name" value="Sec7"/>
    <property type="match status" value="1"/>
</dbReference>
<dbReference type="FunFam" id="1.25.10.10:FF:000143">
    <property type="entry name" value="ADP-ribosylation factor guanine nucleotide-exchange factor 2 (brefeldin A-inhibited)"/>
    <property type="match status" value="1"/>
</dbReference>
<dbReference type="FunFam" id="1.10.1000.11:FF:000003">
    <property type="entry name" value="Brefeldin A-inhibited guanine nucleotide-exchange protein 1"/>
    <property type="match status" value="1"/>
</dbReference>
<dbReference type="FunFam" id="1.10.220.20:FF:000002">
    <property type="entry name" value="Brefeldin A-inhibited guanine nucleotide-exchange protein 1"/>
    <property type="match status" value="1"/>
</dbReference>
<dbReference type="Gene3D" id="1.10.220.20">
    <property type="match status" value="1"/>
</dbReference>
<dbReference type="Gene3D" id="1.10.1000.11">
    <property type="entry name" value="Arf Nucleotide-binding Site Opener,domain 2"/>
    <property type="match status" value="1"/>
</dbReference>
<dbReference type="InterPro" id="IPR016024">
    <property type="entry name" value="ARM-type_fold"/>
</dbReference>
<dbReference type="InterPro" id="IPR032629">
    <property type="entry name" value="DCB_dom"/>
</dbReference>
<dbReference type="InterPro" id="IPR015403">
    <property type="entry name" value="Mon2/Sec7/BIG1-like_HDS"/>
</dbReference>
<dbReference type="InterPro" id="IPR032691">
    <property type="entry name" value="Mon2/Sec7/BIG1-like_HUS"/>
</dbReference>
<dbReference type="InterPro" id="IPR046455">
    <property type="entry name" value="Sec7/BIG1-like_C"/>
</dbReference>
<dbReference type="InterPro" id="IPR023394">
    <property type="entry name" value="Sec7_C_sf"/>
</dbReference>
<dbReference type="InterPro" id="IPR000904">
    <property type="entry name" value="Sec7_dom"/>
</dbReference>
<dbReference type="InterPro" id="IPR035999">
    <property type="entry name" value="Sec7_dom_sf"/>
</dbReference>
<dbReference type="PANTHER" id="PTHR10663:SF137">
    <property type="entry name" value="BREFELDIN A-INHIBITED GUANINE NUCLEOTIDE-EXCHANGE PROTEIN 1"/>
    <property type="match status" value="1"/>
</dbReference>
<dbReference type="PANTHER" id="PTHR10663">
    <property type="entry name" value="GUANYL-NUCLEOTIDE EXCHANGE FACTOR"/>
    <property type="match status" value="1"/>
</dbReference>
<dbReference type="Pfam" id="PF20252">
    <property type="entry name" value="BIG2_C"/>
    <property type="match status" value="1"/>
</dbReference>
<dbReference type="Pfam" id="PF16213">
    <property type="entry name" value="DCB"/>
    <property type="match status" value="1"/>
</dbReference>
<dbReference type="Pfam" id="PF01369">
    <property type="entry name" value="Sec7"/>
    <property type="match status" value="1"/>
</dbReference>
<dbReference type="Pfam" id="PF09324">
    <property type="entry name" value="Sec7-like_HDS"/>
    <property type="match status" value="1"/>
</dbReference>
<dbReference type="Pfam" id="PF12783">
    <property type="entry name" value="Sec7-like_HUS"/>
    <property type="match status" value="1"/>
</dbReference>
<dbReference type="SMART" id="SM00222">
    <property type="entry name" value="Sec7"/>
    <property type="match status" value="1"/>
</dbReference>
<dbReference type="SUPFAM" id="SSF48371">
    <property type="entry name" value="ARM repeat"/>
    <property type="match status" value="1"/>
</dbReference>
<dbReference type="SUPFAM" id="SSF48425">
    <property type="entry name" value="Sec7 domain"/>
    <property type="match status" value="1"/>
</dbReference>
<dbReference type="PROSITE" id="PS50190">
    <property type="entry name" value="SEC7"/>
    <property type="match status" value="1"/>
</dbReference>